<accession>Q6QMY6</accession>
<gene>
    <name type="primary">Tsku</name>
    <name type="synonym">Eiih</name>
    <name type="synonym">Lrrc54</name>
    <name type="synonym">Tsk</name>
</gene>
<reference key="1">
    <citation type="journal article" date="2005" name="Biochem. J.">
        <title>Identification of a novel rat hepatic gene induced early by insulin, independently of glucose.</title>
        <authorList>
            <person name="Coffy S."/>
            <person name="Decaux J.F."/>
            <person name="Girard J."/>
            <person name="de Keyzer Y."/>
            <person name="Asfari M."/>
        </authorList>
    </citation>
    <scope>NUCLEOTIDE SEQUENCE [MRNA]</scope>
    <scope>TISSUE SPECIFICITY</scope>
    <source>
        <strain>Wistar</strain>
    </source>
</reference>
<reference key="2">
    <citation type="journal article" date="2004" name="Genome Res.">
        <title>The status, quality, and expansion of the NIH full-length cDNA project: the Mammalian Gene Collection (MGC).</title>
        <authorList>
            <consortium name="The MGC Project Team"/>
        </authorList>
    </citation>
    <scope>NUCLEOTIDE SEQUENCE [LARGE SCALE MRNA]</scope>
    <source>
        <tissue>Prostate</tissue>
    </source>
</reference>
<name>TSK_RAT</name>
<dbReference type="EMBL" id="AY533242">
    <property type="protein sequence ID" value="AAS66683.1"/>
    <property type="molecule type" value="mRNA"/>
</dbReference>
<dbReference type="EMBL" id="BC100644">
    <property type="protein sequence ID" value="AAI00645.1"/>
    <property type="molecule type" value="mRNA"/>
</dbReference>
<dbReference type="RefSeq" id="NP_001009965.1">
    <property type="nucleotide sequence ID" value="NM_001009965.2"/>
</dbReference>
<dbReference type="SMR" id="Q6QMY6"/>
<dbReference type="FunCoup" id="Q6QMY6">
    <property type="interactions" value="92"/>
</dbReference>
<dbReference type="STRING" id="10116.ENSRNOP00000029957"/>
<dbReference type="GlyCosmos" id="Q6QMY6">
    <property type="glycosylation" value="3 sites, No reported glycans"/>
</dbReference>
<dbReference type="GlyGen" id="Q6QMY6">
    <property type="glycosylation" value="3 sites"/>
</dbReference>
<dbReference type="PhosphoSitePlus" id="Q6QMY6"/>
<dbReference type="PaxDb" id="10116-ENSRNOP00000029957"/>
<dbReference type="GeneID" id="308843"/>
<dbReference type="KEGG" id="rno:308843"/>
<dbReference type="UCSC" id="RGD:1359311">
    <property type="organism name" value="rat"/>
</dbReference>
<dbReference type="AGR" id="RGD:1359311"/>
<dbReference type="CTD" id="25987"/>
<dbReference type="RGD" id="1359311">
    <property type="gene designation" value="Tsku"/>
</dbReference>
<dbReference type="eggNOG" id="KOG0619">
    <property type="taxonomic scope" value="Eukaryota"/>
</dbReference>
<dbReference type="InParanoid" id="Q6QMY6"/>
<dbReference type="PhylomeDB" id="Q6QMY6"/>
<dbReference type="PRO" id="PR:Q6QMY6"/>
<dbReference type="Proteomes" id="UP000002494">
    <property type="component" value="Unplaced"/>
</dbReference>
<dbReference type="GO" id="GO:0031012">
    <property type="term" value="C:extracellular matrix"/>
    <property type="evidence" value="ECO:0000318"/>
    <property type="project" value="GO_Central"/>
</dbReference>
<dbReference type="GO" id="GO:0005615">
    <property type="term" value="C:extracellular space"/>
    <property type="evidence" value="ECO:0000250"/>
    <property type="project" value="UniProtKB"/>
</dbReference>
<dbReference type="GO" id="GO:0050431">
    <property type="term" value="F:transforming growth factor beta binding"/>
    <property type="evidence" value="ECO:0000250"/>
    <property type="project" value="UniProtKB"/>
</dbReference>
<dbReference type="GO" id="GO:0021960">
    <property type="term" value="P:anterior commissure morphogenesis"/>
    <property type="evidence" value="ECO:0000250"/>
    <property type="project" value="UniProtKB"/>
</dbReference>
<dbReference type="GO" id="GO:0098868">
    <property type="term" value="P:bone growth"/>
    <property type="evidence" value="ECO:0000250"/>
    <property type="project" value="UniProtKB"/>
</dbReference>
<dbReference type="GO" id="GO:0043010">
    <property type="term" value="P:camera-type eye development"/>
    <property type="evidence" value="ECO:0000250"/>
    <property type="project" value="UniProtKB"/>
</dbReference>
<dbReference type="GO" id="GO:0033344">
    <property type="term" value="P:cholesterol efflux"/>
    <property type="evidence" value="ECO:0000250"/>
    <property type="project" value="UniProtKB"/>
</dbReference>
<dbReference type="GO" id="GO:0042632">
    <property type="term" value="P:cholesterol homeostasis"/>
    <property type="evidence" value="ECO:0000250"/>
    <property type="project" value="UniProtKB"/>
</dbReference>
<dbReference type="GO" id="GO:0008203">
    <property type="term" value="P:cholesterol metabolic process"/>
    <property type="evidence" value="ECO:0000250"/>
    <property type="project" value="UniProtKB"/>
</dbReference>
<dbReference type="GO" id="GO:0061073">
    <property type="term" value="P:ciliary body morphogenesis"/>
    <property type="evidence" value="ECO:0000250"/>
    <property type="project" value="UniProtKB"/>
</dbReference>
<dbReference type="GO" id="GO:0021540">
    <property type="term" value="P:corpus callosum morphogenesis"/>
    <property type="evidence" value="ECO:0000266"/>
    <property type="project" value="RGD"/>
</dbReference>
<dbReference type="GO" id="GO:0097009">
    <property type="term" value="P:energy homeostasis"/>
    <property type="evidence" value="ECO:0000250"/>
    <property type="project" value="UniProtKB"/>
</dbReference>
<dbReference type="GO" id="GO:0003431">
    <property type="term" value="P:growth plate cartilage chondrocyte development"/>
    <property type="evidence" value="ECO:0000250"/>
    <property type="project" value="UniProtKB"/>
</dbReference>
<dbReference type="GO" id="GO:0021766">
    <property type="term" value="P:hippocampus development"/>
    <property type="evidence" value="ECO:0000250"/>
    <property type="project" value="UniProtKB"/>
</dbReference>
<dbReference type="GO" id="GO:0060122">
    <property type="term" value="P:inner ear receptor cell stereocilium organization"/>
    <property type="evidence" value="ECO:0000250"/>
    <property type="project" value="UniProtKB"/>
</dbReference>
<dbReference type="GO" id="GO:0021670">
    <property type="term" value="P:lateral ventricle development"/>
    <property type="evidence" value="ECO:0000266"/>
    <property type="project" value="RGD"/>
</dbReference>
<dbReference type="GO" id="GO:1904761">
    <property type="term" value="P:negative regulation of myofibroblast differentiation"/>
    <property type="evidence" value="ECO:0000250"/>
    <property type="project" value="UniProtKB"/>
</dbReference>
<dbReference type="GO" id="GO:0010977">
    <property type="term" value="P:negative regulation of neuron projection development"/>
    <property type="evidence" value="ECO:0000250"/>
    <property type="project" value="UniProtKB"/>
</dbReference>
<dbReference type="GO" id="GO:0032911">
    <property type="term" value="P:negative regulation of transforming growth factor beta1 production"/>
    <property type="evidence" value="ECO:0000250"/>
    <property type="project" value="UniProtKB"/>
</dbReference>
<dbReference type="GO" id="GO:0030178">
    <property type="term" value="P:negative regulation of Wnt signaling pathway"/>
    <property type="evidence" value="ECO:0000250"/>
    <property type="project" value="UniProtKB"/>
</dbReference>
<dbReference type="GO" id="GO:0042635">
    <property type="term" value="P:positive regulation of hair cycle"/>
    <property type="evidence" value="ECO:0000250"/>
    <property type="project" value="UniProtKB"/>
</dbReference>
<dbReference type="GO" id="GO:0010468">
    <property type="term" value="P:regulation of gene expression"/>
    <property type="evidence" value="ECO:0000250"/>
    <property type="project" value="UniProtKB"/>
</dbReference>
<dbReference type="GO" id="GO:0042060">
    <property type="term" value="P:wound healing"/>
    <property type="evidence" value="ECO:0000250"/>
    <property type="project" value="UniProtKB"/>
</dbReference>
<dbReference type="FunFam" id="3.80.10.10:FF:000609">
    <property type="entry name" value="Tsukushi, small leucine rich proteoglycan"/>
    <property type="match status" value="1"/>
</dbReference>
<dbReference type="FunFam" id="3.80.10.10:FF:000308">
    <property type="entry name" value="tsukushin isoform X3"/>
    <property type="match status" value="1"/>
</dbReference>
<dbReference type="Gene3D" id="3.80.10.10">
    <property type="entry name" value="Ribonuclease Inhibitor"/>
    <property type="match status" value="2"/>
</dbReference>
<dbReference type="InterPro" id="IPR050328">
    <property type="entry name" value="Dev_Immune_Receptor"/>
</dbReference>
<dbReference type="InterPro" id="IPR001611">
    <property type="entry name" value="Leu-rich_rpt"/>
</dbReference>
<dbReference type="InterPro" id="IPR003591">
    <property type="entry name" value="Leu-rich_rpt_typical-subtyp"/>
</dbReference>
<dbReference type="InterPro" id="IPR032675">
    <property type="entry name" value="LRR_dom_sf"/>
</dbReference>
<dbReference type="PANTHER" id="PTHR24373">
    <property type="entry name" value="SLIT RELATED LEUCINE-RICH REPEAT NEURONAL PROTEIN"/>
    <property type="match status" value="1"/>
</dbReference>
<dbReference type="PANTHER" id="PTHR24373:SF352">
    <property type="entry name" value="TSUKUSHI"/>
    <property type="match status" value="1"/>
</dbReference>
<dbReference type="Pfam" id="PF13855">
    <property type="entry name" value="LRR_8"/>
    <property type="match status" value="2"/>
</dbReference>
<dbReference type="PRINTS" id="PR00019">
    <property type="entry name" value="LEURICHRPT"/>
</dbReference>
<dbReference type="SMART" id="SM00369">
    <property type="entry name" value="LRR_TYP"/>
    <property type="match status" value="7"/>
</dbReference>
<dbReference type="SUPFAM" id="SSF52058">
    <property type="entry name" value="L domain-like"/>
    <property type="match status" value="1"/>
</dbReference>
<dbReference type="PROSITE" id="PS51450">
    <property type="entry name" value="LRR"/>
    <property type="match status" value="8"/>
</dbReference>
<organism>
    <name type="scientific">Rattus norvegicus</name>
    <name type="common">Rat</name>
    <dbReference type="NCBI Taxonomy" id="10116"/>
    <lineage>
        <taxon>Eukaryota</taxon>
        <taxon>Metazoa</taxon>
        <taxon>Chordata</taxon>
        <taxon>Craniata</taxon>
        <taxon>Vertebrata</taxon>
        <taxon>Euteleostomi</taxon>
        <taxon>Mammalia</taxon>
        <taxon>Eutheria</taxon>
        <taxon>Euarchontoglires</taxon>
        <taxon>Glires</taxon>
        <taxon>Rodentia</taxon>
        <taxon>Myomorpha</taxon>
        <taxon>Muroidea</taxon>
        <taxon>Muridae</taxon>
        <taxon>Murinae</taxon>
        <taxon>Rattus</taxon>
    </lineage>
</organism>
<keyword id="KW-0217">Developmental protein</keyword>
<keyword id="KW-0325">Glycoprotein</keyword>
<keyword id="KW-0433">Leucine-rich repeat</keyword>
<keyword id="KW-0524">Neurogenesis</keyword>
<keyword id="KW-1185">Reference proteome</keyword>
<keyword id="KW-0677">Repeat</keyword>
<keyword id="KW-0964">Secreted</keyword>
<keyword id="KW-0732">Signal</keyword>
<protein>
    <recommendedName>
        <fullName evidence="2">Tsukushi</fullName>
    </recommendedName>
    <alternativeName>
        <fullName>Early insulin-induced hepatic gene protein</fullName>
        <shortName>EIIH</shortName>
    </alternativeName>
    <alternativeName>
        <fullName>Leucine-rich repeat-containing protein 54</fullName>
    </alternativeName>
</protein>
<feature type="signal peptide" evidence="3">
    <location>
        <begin position="1"/>
        <end position="17"/>
    </location>
</feature>
<feature type="chain" id="PRO_0000240409" description="Tsukushi">
    <location>
        <begin position="18"/>
        <end position="353"/>
    </location>
</feature>
<feature type="domain" description="LRRNT">
    <location>
        <begin position="18"/>
        <end position="59"/>
    </location>
</feature>
<feature type="repeat" description="LRR 1">
    <location>
        <begin position="60"/>
        <end position="80"/>
    </location>
</feature>
<feature type="repeat" description="LRR 2">
    <location>
        <begin position="86"/>
        <end position="107"/>
    </location>
</feature>
<feature type="repeat" description="LRR 3">
    <location>
        <begin position="110"/>
        <end position="131"/>
    </location>
</feature>
<feature type="repeat" description="LRR 4">
    <location>
        <begin position="133"/>
        <end position="154"/>
    </location>
</feature>
<feature type="repeat" description="LRR 5">
    <location>
        <begin position="160"/>
        <end position="180"/>
    </location>
</feature>
<feature type="repeat" description="LRR 6">
    <location>
        <begin position="186"/>
        <end position="207"/>
    </location>
</feature>
<feature type="repeat" description="LRR 7">
    <location>
        <begin position="208"/>
        <end position="228"/>
    </location>
</feature>
<feature type="repeat" description="LRR 8">
    <location>
        <begin position="231"/>
        <end position="253"/>
    </location>
</feature>
<feature type="repeat" description="LRR 9">
    <location>
        <begin position="256"/>
        <end position="277"/>
    </location>
</feature>
<feature type="repeat" description="LRR 10">
    <location>
        <begin position="281"/>
        <end position="302"/>
    </location>
</feature>
<feature type="glycosylation site" description="N-linked (GlcNAc...) asparagine" evidence="3">
    <location>
        <position position="75"/>
    </location>
</feature>
<feature type="glycosylation site" description="N-linked (GlcNAc...) asparagine" evidence="3">
    <location>
        <position position="138"/>
    </location>
</feature>
<feature type="glycosylation site" description="N-linked (GlcNAc...) asparagine" evidence="3">
    <location>
        <position position="191"/>
    </location>
</feature>
<sequence length="353" mass="38091">MLCTLFLLLLALGIVQTTRPCFPGCQCEEETFGLFDSFSLIRVDCSSLGPHIVPVPIPLDTAHLDLSSNRLETVNESVLGGPGYTTLAGLDLSHNLLTSITPTAFSRLRYLESLDLSHNGLAALPAEVFTSSPLSDINLSHNRLREVSISAFTTHSQGRALHVDLSHNLIHRLLPYPARASLSAPTIQSLNLSWNRLRAVPDLRDLPLRYLSLDGNPLATINPGAFMGLAGLTHLSLASLQGILQLPPHGFRELPGLQVLDLSGNPKLKWAGAEVFSGLGLLQELDLSGSSLVPLPETLLHHLPALQSVSVGQDVQCRRLVREGAYHRQPGSSPKVVLHCGDTQESARGPDIL</sequence>
<proteinExistence type="evidence at transcript level"/>
<evidence type="ECO:0000250" key="1">
    <source>
        <dbReference type="UniProtKB" id="Q65Z91"/>
    </source>
</evidence>
<evidence type="ECO:0000250" key="2">
    <source>
        <dbReference type="UniProtKB" id="Q8CBR6"/>
    </source>
</evidence>
<evidence type="ECO:0000255" key="3"/>
<evidence type="ECO:0000269" key="4">
    <source>
    </source>
</evidence>
<comment type="function">
    <text evidence="2">Contributes to various developmental events and other processes such as wound healing and cholesterol homeostasis through its interactions with multiple signaling pathways. Wnt signaling inhibitor which competes with WNT2B for binding to Wnt receptor FZD4 and represses WNT2B-dependent development of the peripheral eye. Plays a role in regulating the hair cycle by controlling TGFB1 signaling. Required for the development of the anterior commissure in the brain by inhibiting neurite outgrowth. Essential for terminal differentiation of hippocampal neural stem cells. Plays a role in regulating bone elongation and bone mass by modulating growth plate chondrocyte function and overall body size. Required for development of the inner ear through its involvement in stereocilia formation in inner hair cells. Facilitates wound healing by inhibiting secretion of TGFB1 from macrophages which prevents myofibroblast differentiation, maintaining inflammatory cell quiescence. Plays a role in cholesterol homeostasis by reducing circulating high-density lipoprotein cholesterol, lowering cholesterol efflux capacity and decreasing cholesterol-to-bile acid conversion in the liver. In one study, shown to negatively regulate sympathetic innervation in brown fat, leading to reduced energy expenditure. In another study, shown not to affect brown fat thermogenic capacity, body weight gain or glucose homeostasis.</text>
</comment>
<comment type="subunit">
    <text evidence="2">Interacts with FZD4 (via FZ domain); competes with WNT2B for binding to FZD4, inhibiting Wnt signaling and repressing peripheral eye development. Interacts with TGFB1; the interaction contributes to regulation of the hair cycle. Interacts with netrin. Interacts with CCN2.</text>
</comment>
<comment type="subcellular location">
    <subcellularLocation>
        <location evidence="2">Secreted</location>
    </subcellularLocation>
</comment>
<comment type="tissue specificity">
    <text evidence="4">Expressed at high levels in the liver, small intestine and placenta. Not or barely detectable in other tissues, including whole pancreas, adipose tissues, skeletal muscle, kidney, spleen, brain, lung and testis.</text>
</comment>
<comment type="induction">
    <text>Early induced by insulin independently of glucose and by 17-beta-estradiol in liver.</text>
</comment>
<comment type="miscellaneous">
    <text evidence="1">This factor is named 'Tsukushi' because its expression pattern in chick embryos is similar to the shape of the Japanese horsetail plant, tsukushi.</text>
</comment>